<reference key="1">
    <citation type="journal article" date="2002" name="Proc. Natl. Acad. Sci. U.S.A.">
        <title>The Brucella suis genome reveals fundamental similarities between animal and plant pathogens and symbionts.</title>
        <authorList>
            <person name="Paulsen I.T."/>
            <person name="Seshadri R."/>
            <person name="Nelson K.E."/>
            <person name="Eisen J.A."/>
            <person name="Heidelberg J.F."/>
            <person name="Read T.D."/>
            <person name="Dodson R.J."/>
            <person name="Umayam L.A."/>
            <person name="Brinkac L.M."/>
            <person name="Beanan M.J."/>
            <person name="Daugherty S.C."/>
            <person name="DeBoy R.T."/>
            <person name="Durkin A.S."/>
            <person name="Kolonay J.F."/>
            <person name="Madupu R."/>
            <person name="Nelson W.C."/>
            <person name="Ayodeji B."/>
            <person name="Kraul M."/>
            <person name="Shetty J."/>
            <person name="Malek J.A."/>
            <person name="Van Aken S.E."/>
            <person name="Riedmuller S."/>
            <person name="Tettelin H."/>
            <person name="Gill S.R."/>
            <person name="White O."/>
            <person name="Salzberg S.L."/>
            <person name="Hoover D.L."/>
            <person name="Lindler L.E."/>
            <person name="Halling S.M."/>
            <person name="Boyle S.M."/>
            <person name="Fraser C.M."/>
        </authorList>
    </citation>
    <scope>NUCLEOTIDE SEQUENCE [LARGE SCALE GENOMIC DNA]</scope>
    <source>
        <strain>1330</strain>
    </source>
</reference>
<reference key="2">
    <citation type="journal article" date="2011" name="J. Bacteriol.">
        <title>Revised genome sequence of Brucella suis 1330.</title>
        <authorList>
            <person name="Tae H."/>
            <person name="Shallom S."/>
            <person name="Settlage R."/>
            <person name="Preston D."/>
            <person name="Adams L.G."/>
            <person name="Garner H.R."/>
        </authorList>
    </citation>
    <scope>NUCLEOTIDE SEQUENCE [LARGE SCALE GENOMIC DNA]</scope>
    <source>
        <strain>1330</strain>
    </source>
</reference>
<comment type="catalytic activity">
    <reaction evidence="1">
        <text>tRNA(Gly) + glycine + ATP = glycyl-tRNA(Gly) + AMP + diphosphate</text>
        <dbReference type="Rhea" id="RHEA:16013"/>
        <dbReference type="Rhea" id="RHEA-COMP:9664"/>
        <dbReference type="Rhea" id="RHEA-COMP:9683"/>
        <dbReference type="ChEBI" id="CHEBI:30616"/>
        <dbReference type="ChEBI" id="CHEBI:33019"/>
        <dbReference type="ChEBI" id="CHEBI:57305"/>
        <dbReference type="ChEBI" id="CHEBI:78442"/>
        <dbReference type="ChEBI" id="CHEBI:78522"/>
        <dbReference type="ChEBI" id="CHEBI:456215"/>
        <dbReference type="EC" id="6.1.1.14"/>
    </reaction>
</comment>
<comment type="subunit">
    <text evidence="1">Tetramer of two alpha and two beta subunits.</text>
</comment>
<comment type="subcellular location">
    <subcellularLocation>
        <location evidence="1">Cytoplasm</location>
    </subcellularLocation>
</comment>
<comment type="similarity">
    <text evidence="1">Belongs to the class-II aminoacyl-tRNA synthetase family.</text>
</comment>
<feature type="chain" id="PRO_0000072829" description="Glycine--tRNA ligase alpha subunit">
    <location>
        <begin position="1"/>
        <end position="308"/>
    </location>
</feature>
<name>SYGA_BRUSU</name>
<protein>
    <recommendedName>
        <fullName evidence="1">Glycine--tRNA ligase alpha subunit</fullName>
        <ecNumber evidence="1">6.1.1.14</ecNumber>
    </recommendedName>
    <alternativeName>
        <fullName evidence="1">Glycyl-tRNA synthetase alpha subunit</fullName>
        <shortName evidence="1">GlyRS</shortName>
    </alternativeName>
</protein>
<dbReference type="EC" id="6.1.1.14" evidence="1"/>
<dbReference type="EMBL" id="AE014291">
    <property type="protein sequence ID" value="AAN29349.1"/>
    <property type="molecule type" value="Genomic_DNA"/>
</dbReference>
<dbReference type="EMBL" id="CP002997">
    <property type="protein sequence ID" value="AEM17762.1"/>
    <property type="molecule type" value="Genomic_DNA"/>
</dbReference>
<dbReference type="RefSeq" id="WP_004688025.1">
    <property type="nucleotide sequence ID" value="NZ_KN046804.1"/>
</dbReference>
<dbReference type="SMR" id="Q8G2C1"/>
<dbReference type="KEGG" id="bms:BR0403"/>
<dbReference type="KEGG" id="bsi:BS1330_I0404"/>
<dbReference type="PATRIC" id="fig|204722.22.peg.1440"/>
<dbReference type="HOGENOM" id="CLU_057066_1_0_5"/>
<dbReference type="PhylomeDB" id="Q8G2C1"/>
<dbReference type="Proteomes" id="UP000007104">
    <property type="component" value="Chromosome I"/>
</dbReference>
<dbReference type="GO" id="GO:0005829">
    <property type="term" value="C:cytosol"/>
    <property type="evidence" value="ECO:0007669"/>
    <property type="project" value="TreeGrafter"/>
</dbReference>
<dbReference type="GO" id="GO:0005524">
    <property type="term" value="F:ATP binding"/>
    <property type="evidence" value="ECO:0007669"/>
    <property type="project" value="UniProtKB-UniRule"/>
</dbReference>
<dbReference type="GO" id="GO:0004820">
    <property type="term" value="F:glycine-tRNA ligase activity"/>
    <property type="evidence" value="ECO:0007669"/>
    <property type="project" value="UniProtKB-UniRule"/>
</dbReference>
<dbReference type="GO" id="GO:0006426">
    <property type="term" value="P:glycyl-tRNA aminoacylation"/>
    <property type="evidence" value="ECO:0007669"/>
    <property type="project" value="UniProtKB-UniRule"/>
</dbReference>
<dbReference type="CDD" id="cd00733">
    <property type="entry name" value="GlyRS_alpha_core"/>
    <property type="match status" value="1"/>
</dbReference>
<dbReference type="FunFam" id="3.30.930.10:FF:000006">
    <property type="entry name" value="Glycine--tRNA ligase alpha subunit"/>
    <property type="match status" value="1"/>
</dbReference>
<dbReference type="Gene3D" id="3.30.930.10">
    <property type="entry name" value="Bira Bifunctional Protein, Domain 2"/>
    <property type="match status" value="1"/>
</dbReference>
<dbReference type="Gene3D" id="1.20.58.180">
    <property type="entry name" value="Class II aaRS and biotin synthetases, domain 2"/>
    <property type="match status" value="1"/>
</dbReference>
<dbReference type="HAMAP" id="MF_00254">
    <property type="entry name" value="Gly_tRNA_synth_alpha"/>
    <property type="match status" value="1"/>
</dbReference>
<dbReference type="InterPro" id="IPR045864">
    <property type="entry name" value="aa-tRNA-synth_II/BPL/LPL"/>
</dbReference>
<dbReference type="InterPro" id="IPR006194">
    <property type="entry name" value="Gly-tRNA-synth_heterodimer"/>
</dbReference>
<dbReference type="InterPro" id="IPR002310">
    <property type="entry name" value="Gly-tRNA_ligase_asu"/>
</dbReference>
<dbReference type="NCBIfam" id="TIGR00388">
    <property type="entry name" value="glyQ"/>
    <property type="match status" value="1"/>
</dbReference>
<dbReference type="NCBIfam" id="NF006827">
    <property type="entry name" value="PRK09348.1"/>
    <property type="match status" value="1"/>
</dbReference>
<dbReference type="PANTHER" id="PTHR30075:SF2">
    <property type="entry name" value="GLYCINE--TRNA LIGASE, CHLOROPLASTIC_MITOCHONDRIAL 2"/>
    <property type="match status" value="1"/>
</dbReference>
<dbReference type="PANTHER" id="PTHR30075">
    <property type="entry name" value="GLYCYL-TRNA SYNTHETASE"/>
    <property type="match status" value="1"/>
</dbReference>
<dbReference type="Pfam" id="PF02091">
    <property type="entry name" value="tRNA-synt_2e"/>
    <property type="match status" value="1"/>
</dbReference>
<dbReference type="PRINTS" id="PR01044">
    <property type="entry name" value="TRNASYNTHGA"/>
</dbReference>
<dbReference type="SUPFAM" id="SSF55681">
    <property type="entry name" value="Class II aaRS and biotin synthetases"/>
    <property type="match status" value="1"/>
</dbReference>
<dbReference type="PROSITE" id="PS50861">
    <property type="entry name" value="AA_TRNA_LIGASE_II_GLYAB"/>
    <property type="match status" value="1"/>
</dbReference>
<proteinExistence type="inferred from homology"/>
<gene>
    <name evidence="1" type="primary">glyQ</name>
    <name type="ordered locus">BR0403</name>
    <name type="ordered locus">BS1330_I0404</name>
</gene>
<organism>
    <name type="scientific">Brucella suis biovar 1 (strain 1330)</name>
    <dbReference type="NCBI Taxonomy" id="204722"/>
    <lineage>
        <taxon>Bacteria</taxon>
        <taxon>Pseudomonadati</taxon>
        <taxon>Pseudomonadota</taxon>
        <taxon>Alphaproteobacteria</taxon>
        <taxon>Hyphomicrobiales</taxon>
        <taxon>Brucellaceae</taxon>
        <taxon>Brucella/Ochrobactrum group</taxon>
        <taxon>Brucella</taxon>
    </lineage>
</organism>
<keyword id="KW-0030">Aminoacyl-tRNA synthetase</keyword>
<keyword id="KW-0067">ATP-binding</keyword>
<keyword id="KW-0963">Cytoplasm</keyword>
<keyword id="KW-0436">Ligase</keyword>
<keyword id="KW-0547">Nucleotide-binding</keyword>
<keyword id="KW-0648">Protein biosynthesis</keyword>
<sequence>MHPTRSFQGLILTLHNYWAEHGCAILQPYDMEVGAGTFHPATTLRSLGPKPWKAAYVQPSRRPKDGRYGENPNRLQHYYQYQVLIKPSPPNLQDLYLGSLKAIGLDPTLHDVRFVEDDWESPTLGAWGLGWECWCDGMEVSQFTYFQQVCGIECSPVAGELTYGLERLAMYVQGVDNVYDLNFNGLEGDEKVTYGDVFLQAEQEYSRYNFEMANTETLHQHFIDAERECEAILKAGSTGENSLHKCVFPAYDQCIKASHVFNLMDARGVISVTERQSYILRVRNLARQCGEAFLLTDAGGFNFKREGE</sequence>
<evidence type="ECO:0000255" key="1">
    <source>
        <dbReference type="HAMAP-Rule" id="MF_00254"/>
    </source>
</evidence>
<accession>Q8G2C1</accession>
<accession>G0K6M5</accession>